<protein>
    <recommendedName>
        <fullName evidence="1">Glutamyl-tRNA(Gln) amidotransferase subunit E</fullName>
        <shortName evidence="1">Glu-ADT subunit E</shortName>
        <ecNumber evidence="1">6.3.5.-</ecNumber>
    </recommendedName>
</protein>
<dbReference type="EC" id="6.3.5.-" evidence="1"/>
<dbReference type="EMBL" id="CP000609">
    <property type="protein sequence ID" value="ABO34641.1"/>
    <property type="molecule type" value="Genomic_DNA"/>
</dbReference>
<dbReference type="RefSeq" id="WP_011868096.1">
    <property type="nucleotide sequence ID" value="NC_009135.1"/>
</dbReference>
<dbReference type="SMR" id="A4FWR6"/>
<dbReference type="STRING" id="402880.MmarC5_0325"/>
<dbReference type="GeneID" id="4928308"/>
<dbReference type="KEGG" id="mmq:MmarC5_0325"/>
<dbReference type="eggNOG" id="arCOG01719">
    <property type="taxonomic scope" value="Archaea"/>
</dbReference>
<dbReference type="HOGENOM" id="CLU_030702_0_0_2"/>
<dbReference type="OrthoDB" id="7316at2157"/>
<dbReference type="Proteomes" id="UP000000253">
    <property type="component" value="Chromosome"/>
</dbReference>
<dbReference type="GO" id="GO:0005737">
    <property type="term" value="C:cytoplasm"/>
    <property type="evidence" value="ECO:0007669"/>
    <property type="project" value="InterPro"/>
</dbReference>
<dbReference type="GO" id="GO:0004812">
    <property type="term" value="F:aminoacyl-tRNA ligase activity"/>
    <property type="evidence" value="ECO:0007669"/>
    <property type="project" value="InterPro"/>
</dbReference>
<dbReference type="GO" id="GO:0005524">
    <property type="term" value="F:ATP binding"/>
    <property type="evidence" value="ECO:0007669"/>
    <property type="project" value="UniProtKB-KW"/>
</dbReference>
<dbReference type="GO" id="GO:0050567">
    <property type="term" value="F:glutaminyl-tRNA synthase (glutamine-hydrolyzing) activity"/>
    <property type="evidence" value="ECO:0007669"/>
    <property type="project" value="UniProtKB-UniRule"/>
</dbReference>
<dbReference type="GO" id="GO:0070681">
    <property type="term" value="P:glutaminyl-tRNAGln biosynthesis via transamidation"/>
    <property type="evidence" value="ECO:0007669"/>
    <property type="project" value="TreeGrafter"/>
</dbReference>
<dbReference type="GO" id="GO:0006412">
    <property type="term" value="P:translation"/>
    <property type="evidence" value="ECO:0007669"/>
    <property type="project" value="UniProtKB-UniRule"/>
</dbReference>
<dbReference type="FunFam" id="1.10.10.410:FF:000003">
    <property type="entry name" value="Glutamyl-tRNA(Gln) amidotransferase subunit E"/>
    <property type="match status" value="1"/>
</dbReference>
<dbReference type="FunFam" id="3.30.1360.30:FF:000003">
    <property type="entry name" value="Glutamyl-tRNA(Gln) amidotransferase subunit E"/>
    <property type="match status" value="1"/>
</dbReference>
<dbReference type="Gene3D" id="1.10.10.410">
    <property type="match status" value="1"/>
</dbReference>
<dbReference type="Gene3D" id="3.30.1360.30">
    <property type="entry name" value="GAD-like domain"/>
    <property type="match status" value="1"/>
</dbReference>
<dbReference type="Gene3D" id="1.10.150.380">
    <property type="entry name" value="GatB domain, N-terminal subdomain"/>
    <property type="match status" value="1"/>
</dbReference>
<dbReference type="HAMAP" id="MF_00588">
    <property type="entry name" value="GatE"/>
    <property type="match status" value="1"/>
</dbReference>
<dbReference type="InterPro" id="IPR017959">
    <property type="entry name" value="Asn/Gln-tRNA_amidoTrfase_suB/E"/>
</dbReference>
<dbReference type="InterPro" id="IPR006075">
    <property type="entry name" value="Asn/Gln-tRNA_Trfase_suB/E_cat"/>
</dbReference>
<dbReference type="InterPro" id="IPR018027">
    <property type="entry name" value="Asn/Gln_amidotransferase"/>
</dbReference>
<dbReference type="InterPro" id="IPR003789">
    <property type="entry name" value="Asn/Gln_tRNA_amidoTrase-B-like"/>
</dbReference>
<dbReference type="InterPro" id="IPR004115">
    <property type="entry name" value="GAD-like_sf"/>
</dbReference>
<dbReference type="InterPro" id="IPR029351">
    <property type="entry name" value="GAD_dom"/>
</dbReference>
<dbReference type="InterPro" id="IPR042114">
    <property type="entry name" value="GatB_C_1"/>
</dbReference>
<dbReference type="InterPro" id="IPR023168">
    <property type="entry name" value="GatB_Yqey_C_2"/>
</dbReference>
<dbReference type="InterPro" id="IPR004414">
    <property type="entry name" value="GatE"/>
</dbReference>
<dbReference type="InterPro" id="IPR017958">
    <property type="entry name" value="Gln-tRNA_amidoTrfase_suB_CS"/>
</dbReference>
<dbReference type="InterPro" id="IPR014746">
    <property type="entry name" value="Gln_synth/guanido_kin_cat_dom"/>
</dbReference>
<dbReference type="NCBIfam" id="TIGR00134">
    <property type="entry name" value="gatE_arch"/>
    <property type="match status" value="1"/>
</dbReference>
<dbReference type="NCBIfam" id="NF003107">
    <property type="entry name" value="PRK04028.1"/>
    <property type="match status" value="1"/>
</dbReference>
<dbReference type="PANTHER" id="PTHR11659">
    <property type="entry name" value="GLUTAMYL-TRNA GLN AMIDOTRANSFERASE SUBUNIT B MITOCHONDRIAL AND PROKARYOTIC PET112-RELATED"/>
    <property type="match status" value="1"/>
</dbReference>
<dbReference type="PANTHER" id="PTHR11659:SF2">
    <property type="entry name" value="GLUTAMYL-TRNA(GLN) AMIDOTRANSFERASE SUBUNIT E"/>
    <property type="match status" value="1"/>
</dbReference>
<dbReference type="Pfam" id="PF02938">
    <property type="entry name" value="GAD"/>
    <property type="match status" value="1"/>
</dbReference>
<dbReference type="Pfam" id="PF02934">
    <property type="entry name" value="GatB_N"/>
    <property type="match status" value="1"/>
</dbReference>
<dbReference type="Pfam" id="PF02637">
    <property type="entry name" value="GatB_Yqey"/>
    <property type="match status" value="1"/>
</dbReference>
<dbReference type="SMART" id="SM00845">
    <property type="entry name" value="GatB_Yqey"/>
    <property type="match status" value="1"/>
</dbReference>
<dbReference type="SUPFAM" id="SSF55261">
    <property type="entry name" value="GAD domain-like"/>
    <property type="match status" value="1"/>
</dbReference>
<dbReference type="SUPFAM" id="SSF89095">
    <property type="entry name" value="GatB/YqeY motif"/>
    <property type="match status" value="1"/>
</dbReference>
<dbReference type="SUPFAM" id="SSF55931">
    <property type="entry name" value="Glutamine synthetase/guanido kinase"/>
    <property type="match status" value="1"/>
</dbReference>
<dbReference type="PROSITE" id="PS01234">
    <property type="entry name" value="GATB"/>
    <property type="match status" value="1"/>
</dbReference>
<sequence length="631" mass="71060">MDHDYEKLGLKVGLEIHQQLNTKRKLFCNCPTKIRDDEPHGEIERVLRPSQSEMGHVDKAALLESKKEKKFIYQYYNDSTCLVELDDEPPHDVSPEAVDTALEVSTLMNMKMADEVQIMRKMVIDGSNTSGFQRTMFVSQEGFIETEYGNIGVTSLCLEEDACKKIEDGKDYTKYCVDRLGIPLLEITTEPDITSPKMGKEAARRIGTILRATGKVKRGLGTIRQDVNISIREGARIEVKGVQNLDLIEKIIENEVTRQISLNEIKEELLKRNAEVVDEIKDITELLKDTESKVLKSALKNKGVIRAILLKGFSGMIGREVQPGRRLGTEFSDRGKVLGGVGGLFHTDELPKYGITEEEVTKLKEYMNCGENDAVILVADKKNKVERALNAVIERAKESMIGIPEETRKALDDGNTSYLRPLPGAARMYPETDVPTITITEEKLEAIRNNLPEMPEEKLVRFVKEYELNEDLAKQMVMSYHVDLFESLSKKYSKIKPTLIATTLEATLKEIKREGLDTDLLTEEHLEELFKGLSEDKMSKEAVPDVIKGFIENPSKKLDEILEIKGMSSMSVDEVESIIEDIINQNISQVNEKGMGAMGLLMGRCMAQLRGKADGKLINTTLQKKLKEKVQ</sequence>
<accession>A4FWR6</accession>
<name>GATE_METM5</name>
<comment type="function">
    <text evidence="1">Allows the formation of correctly charged Gln-tRNA(Gln) through the transamidation of misacylated Glu-tRNA(Gln) in organisms which lack glutaminyl-tRNA synthetase. The reaction takes place in the presence of glutamine and ATP through an activated gamma-phospho-Glu-tRNA(Gln). The GatDE system is specific for glutamate and does not act on aspartate.</text>
</comment>
<comment type="catalytic activity">
    <reaction evidence="1">
        <text>L-glutamyl-tRNA(Gln) + L-glutamine + ATP + H2O = L-glutaminyl-tRNA(Gln) + L-glutamate + ADP + phosphate + H(+)</text>
        <dbReference type="Rhea" id="RHEA:17521"/>
        <dbReference type="Rhea" id="RHEA-COMP:9681"/>
        <dbReference type="Rhea" id="RHEA-COMP:9684"/>
        <dbReference type="ChEBI" id="CHEBI:15377"/>
        <dbReference type="ChEBI" id="CHEBI:15378"/>
        <dbReference type="ChEBI" id="CHEBI:29985"/>
        <dbReference type="ChEBI" id="CHEBI:30616"/>
        <dbReference type="ChEBI" id="CHEBI:43474"/>
        <dbReference type="ChEBI" id="CHEBI:58359"/>
        <dbReference type="ChEBI" id="CHEBI:78520"/>
        <dbReference type="ChEBI" id="CHEBI:78521"/>
        <dbReference type="ChEBI" id="CHEBI:456216"/>
    </reaction>
</comment>
<comment type="subunit">
    <text evidence="1">Heterodimer of GatD and GatE.</text>
</comment>
<comment type="similarity">
    <text evidence="1">Belongs to the GatB/GatE family. GatE subfamily.</text>
</comment>
<evidence type="ECO:0000255" key="1">
    <source>
        <dbReference type="HAMAP-Rule" id="MF_00588"/>
    </source>
</evidence>
<reference key="1">
    <citation type="submission" date="2007-03" db="EMBL/GenBank/DDBJ databases">
        <title>Complete sequence of chromosome of Methanococcus maripaludis C5.</title>
        <authorList>
            <consortium name="US DOE Joint Genome Institute"/>
            <person name="Copeland A."/>
            <person name="Lucas S."/>
            <person name="Lapidus A."/>
            <person name="Barry K."/>
            <person name="Glavina del Rio T."/>
            <person name="Dalin E."/>
            <person name="Tice H."/>
            <person name="Pitluck S."/>
            <person name="Chertkov O."/>
            <person name="Brettin T."/>
            <person name="Bruce D."/>
            <person name="Han C."/>
            <person name="Detter J.C."/>
            <person name="Schmutz J."/>
            <person name="Larimer F."/>
            <person name="Land M."/>
            <person name="Hauser L."/>
            <person name="Kyrpides N."/>
            <person name="Mikhailova N."/>
            <person name="Sieprawska-Lupa M."/>
            <person name="Whitman W.B."/>
            <person name="Richardson P."/>
        </authorList>
    </citation>
    <scope>NUCLEOTIDE SEQUENCE [LARGE SCALE GENOMIC DNA]</scope>
    <source>
        <strain>C5 / ATCC BAA-1333</strain>
    </source>
</reference>
<organism>
    <name type="scientific">Methanococcus maripaludis (strain C5 / ATCC BAA-1333)</name>
    <dbReference type="NCBI Taxonomy" id="402880"/>
    <lineage>
        <taxon>Archaea</taxon>
        <taxon>Methanobacteriati</taxon>
        <taxon>Methanobacteriota</taxon>
        <taxon>Methanomada group</taxon>
        <taxon>Methanococci</taxon>
        <taxon>Methanococcales</taxon>
        <taxon>Methanococcaceae</taxon>
        <taxon>Methanococcus</taxon>
    </lineage>
</organism>
<proteinExistence type="inferred from homology"/>
<keyword id="KW-0067">ATP-binding</keyword>
<keyword id="KW-0436">Ligase</keyword>
<keyword id="KW-0547">Nucleotide-binding</keyword>
<keyword id="KW-0648">Protein biosynthesis</keyword>
<feature type="chain" id="PRO_1000025478" description="Glutamyl-tRNA(Gln) amidotransferase subunit E">
    <location>
        <begin position="1"/>
        <end position="631"/>
    </location>
</feature>
<gene>
    <name evidence="1" type="primary">gatE</name>
    <name type="ordered locus">MmarC5_0325</name>
</gene>